<organism>
    <name type="scientific">Flavobacterium johnsoniae (strain ATCC 17061 / DSM 2064 / JCM 8514 / BCRC 14874 / CCUG 350202 / NBRC 14942 / NCIMB 11054 / UW101)</name>
    <name type="common">Cytophaga johnsonae</name>
    <dbReference type="NCBI Taxonomy" id="376686"/>
    <lineage>
        <taxon>Bacteria</taxon>
        <taxon>Pseudomonadati</taxon>
        <taxon>Bacteroidota</taxon>
        <taxon>Flavobacteriia</taxon>
        <taxon>Flavobacteriales</taxon>
        <taxon>Flavobacteriaceae</taxon>
        <taxon>Flavobacterium</taxon>
    </lineage>
</organism>
<keyword id="KW-0050">Antiport</keyword>
<keyword id="KW-0997">Cell inner membrane</keyword>
<keyword id="KW-1003">Cell membrane</keyword>
<keyword id="KW-0406">Ion transport</keyword>
<keyword id="KW-0472">Membrane</keyword>
<keyword id="KW-0915">Sodium</keyword>
<keyword id="KW-0739">Sodium transport</keyword>
<keyword id="KW-0812">Transmembrane</keyword>
<keyword id="KW-1133">Transmembrane helix</keyword>
<keyword id="KW-0813">Transport</keyword>
<accession>A5FBK7</accession>
<dbReference type="EMBL" id="CP000685">
    <property type="protein sequence ID" value="ABQ07411.1"/>
    <property type="molecule type" value="Genomic_DNA"/>
</dbReference>
<dbReference type="SMR" id="A5FBK7"/>
<dbReference type="STRING" id="376686.Fjoh_4405"/>
<dbReference type="KEGG" id="fjo:Fjoh_4405"/>
<dbReference type="eggNOG" id="COG3004">
    <property type="taxonomic scope" value="Bacteria"/>
</dbReference>
<dbReference type="HOGENOM" id="CLU_015803_1_2_10"/>
<dbReference type="OrthoDB" id="9808135at2"/>
<dbReference type="Proteomes" id="UP000006694">
    <property type="component" value="Chromosome"/>
</dbReference>
<dbReference type="GO" id="GO:0005886">
    <property type="term" value="C:plasma membrane"/>
    <property type="evidence" value="ECO:0007669"/>
    <property type="project" value="UniProtKB-SubCell"/>
</dbReference>
<dbReference type="GO" id="GO:0015385">
    <property type="term" value="F:sodium:proton antiporter activity"/>
    <property type="evidence" value="ECO:0007669"/>
    <property type="project" value="TreeGrafter"/>
</dbReference>
<dbReference type="GO" id="GO:0006885">
    <property type="term" value="P:regulation of pH"/>
    <property type="evidence" value="ECO:0007669"/>
    <property type="project" value="InterPro"/>
</dbReference>
<dbReference type="Gene3D" id="1.20.1530.10">
    <property type="entry name" value="Na+/H+ antiporter like domain"/>
    <property type="match status" value="1"/>
</dbReference>
<dbReference type="HAMAP" id="MF_01844">
    <property type="entry name" value="NhaA"/>
    <property type="match status" value="1"/>
</dbReference>
<dbReference type="InterPro" id="IPR023171">
    <property type="entry name" value="Na/H_antiporter_dom_sf"/>
</dbReference>
<dbReference type="InterPro" id="IPR004670">
    <property type="entry name" value="NhaA"/>
</dbReference>
<dbReference type="NCBIfam" id="TIGR00773">
    <property type="entry name" value="NhaA"/>
    <property type="match status" value="1"/>
</dbReference>
<dbReference type="NCBIfam" id="NF007111">
    <property type="entry name" value="PRK09560.1"/>
    <property type="match status" value="1"/>
</dbReference>
<dbReference type="NCBIfam" id="NF007112">
    <property type="entry name" value="PRK09561.1"/>
    <property type="match status" value="1"/>
</dbReference>
<dbReference type="PANTHER" id="PTHR30341:SF0">
    <property type="entry name" value="NA(+)_H(+) ANTIPORTER NHAA"/>
    <property type="match status" value="1"/>
</dbReference>
<dbReference type="PANTHER" id="PTHR30341">
    <property type="entry name" value="SODIUM ION/PROTON ANTIPORTER NHAA-RELATED"/>
    <property type="match status" value="1"/>
</dbReference>
<dbReference type="Pfam" id="PF06965">
    <property type="entry name" value="Na_H_antiport_1"/>
    <property type="match status" value="1"/>
</dbReference>
<protein>
    <recommendedName>
        <fullName evidence="1">Na(+)/H(+) antiporter NhaA 2</fullName>
    </recommendedName>
    <alternativeName>
        <fullName evidence="1">Sodium/proton antiporter NhaA 2</fullName>
    </alternativeName>
</protein>
<sequence length="408" mass="43972">MDLLGILSPNAYFCSMAKLINLKIFTHFFRSSAAGGILLLICVLVSLIVANTGLGVHFNDFLGYPLGFEAAGLQLRYPILLWINDGLMAVFFLLVGLEIKREVIEGELSSLRHAALPVLAAVGGVIIPALIYFLFNGQSPDTAKGWGIPMATDIAFALGILSLLGDKVPSGLKIFLAALAIVDDLIAILVIAVFYSSELHFLYLGYAGGIFVLLMVFNRLGVKNLFFYLLPGAVMWYFIHHSGIHATIAGVLTALTLPTNQEDKDSPLEKLEHALARPVNFIIMPVFALANTNIAFESEMLQGLTGNLGLGIILGLVLGKPIGIFVMSWLSVKIRAADLPAQTTWTHVLGLGLLGGIGFTMSIFIALLSFQEQAYQNEAKFAILTASVLAGAAGFILLSSYNKNKQEQ</sequence>
<gene>
    <name evidence="1" type="primary">nhaA2</name>
    <name type="ordered locus">Fjoh_4405</name>
</gene>
<feature type="chain" id="PRO_0000334292" description="Na(+)/H(+) antiporter NhaA 2">
    <location>
        <begin position="1"/>
        <end position="408"/>
    </location>
</feature>
<feature type="transmembrane region" description="Helical" evidence="1">
    <location>
        <begin position="36"/>
        <end position="56"/>
    </location>
</feature>
<feature type="transmembrane region" description="Helical" evidence="1">
    <location>
        <begin position="79"/>
        <end position="99"/>
    </location>
</feature>
<feature type="transmembrane region" description="Helical" evidence="1">
    <location>
        <begin position="115"/>
        <end position="135"/>
    </location>
</feature>
<feature type="transmembrane region" description="Helical" evidence="1">
    <location>
        <begin position="145"/>
        <end position="165"/>
    </location>
</feature>
<feature type="transmembrane region" description="Helical" evidence="1">
    <location>
        <begin position="174"/>
        <end position="194"/>
    </location>
</feature>
<feature type="transmembrane region" description="Helical" evidence="1">
    <location>
        <begin position="197"/>
        <end position="217"/>
    </location>
</feature>
<feature type="transmembrane region" description="Helical" evidence="1">
    <location>
        <begin position="225"/>
        <end position="245"/>
    </location>
</feature>
<feature type="transmembrane region" description="Helical" evidence="1">
    <location>
        <begin position="281"/>
        <end position="301"/>
    </location>
</feature>
<feature type="transmembrane region" description="Helical" evidence="1">
    <location>
        <begin position="310"/>
        <end position="330"/>
    </location>
</feature>
<feature type="transmembrane region" description="Helical" evidence="1">
    <location>
        <begin position="348"/>
        <end position="368"/>
    </location>
</feature>
<feature type="transmembrane region" description="Helical" evidence="1">
    <location>
        <begin position="381"/>
        <end position="401"/>
    </location>
</feature>
<comment type="function">
    <text evidence="1">Na(+)/H(+) antiporter that extrudes sodium in exchange for external protons.</text>
</comment>
<comment type="catalytic activity">
    <reaction evidence="1">
        <text>Na(+)(in) + 2 H(+)(out) = Na(+)(out) + 2 H(+)(in)</text>
        <dbReference type="Rhea" id="RHEA:29251"/>
        <dbReference type="ChEBI" id="CHEBI:15378"/>
        <dbReference type="ChEBI" id="CHEBI:29101"/>
    </reaction>
    <physiologicalReaction direction="left-to-right" evidence="1">
        <dbReference type="Rhea" id="RHEA:29252"/>
    </physiologicalReaction>
</comment>
<comment type="subcellular location">
    <subcellularLocation>
        <location evidence="1">Cell inner membrane</location>
        <topology evidence="1">Multi-pass membrane protein</topology>
    </subcellularLocation>
</comment>
<comment type="similarity">
    <text evidence="1">Belongs to the NhaA Na(+)/H(+) (TC 2.A.33) antiporter family.</text>
</comment>
<name>NHAA2_FLAJ1</name>
<reference key="1">
    <citation type="journal article" date="2009" name="Appl. Environ. Microbiol.">
        <title>Novel features of the polysaccharide-digesting gliding bacterium Flavobacterium johnsoniae as revealed by genome sequence analysis.</title>
        <authorList>
            <person name="McBride M.J."/>
            <person name="Xie G."/>
            <person name="Martens E.C."/>
            <person name="Lapidus A."/>
            <person name="Henrissat B."/>
            <person name="Rhodes R.G."/>
            <person name="Goltsman E."/>
            <person name="Wang W."/>
            <person name="Xu J."/>
            <person name="Hunnicutt D.W."/>
            <person name="Staroscik A.M."/>
            <person name="Hoover T.R."/>
            <person name="Cheng Y.Q."/>
            <person name="Stein J.L."/>
        </authorList>
    </citation>
    <scope>NUCLEOTIDE SEQUENCE [LARGE SCALE GENOMIC DNA]</scope>
    <source>
        <strain>ATCC 17061 / DSM 2064 / JCM 8514 / BCRC 14874 / CCUG 350202 / NBRC 14942 / NCIMB 11054 / UW101</strain>
    </source>
</reference>
<proteinExistence type="inferred from homology"/>
<evidence type="ECO:0000255" key="1">
    <source>
        <dbReference type="HAMAP-Rule" id="MF_01844"/>
    </source>
</evidence>